<proteinExistence type="evidence at protein level"/>
<sequence>MVKIRLARFGSKHNPHYPHYRIVVTDARRKRDGKYIEKIGYYDPRKTTPDWLKVDVERARYWLSVGAQPTDTARRLLRQAGVFRQEAREGA</sequence>
<gene>
    <name evidence="1" type="primary">rpsP</name>
    <name evidence="1" type="synonym">rps16</name>
</gene>
<organism>
    <name type="scientific">Thermus thermophilus</name>
    <dbReference type="NCBI Taxonomy" id="274"/>
    <lineage>
        <taxon>Bacteria</taxon>
        <taxon>Thermotogati</taxon>
        <taxon>Deinococcota</taxon>
        <taxon>Deinococci</taxon>
        <taxon>Thermales</taxon>
        <taxon>Thermaceae</taxon>
        <taxon>Thermus</taxon>
    </lineage>
</organism>
<reference key="1">
    <citation type="submission" date="1998-03" db="EMBL/GenBank/DDBJ databases">
        <title>Ribosomal protein S16 from Thermus thermophilus.</title>
        <authorList>
            <person name="Rak A."/>
            <person name="Wolf-Watz M."/>
            <person name="Kalinin A."/>
            <person name="Garber M.B."/>
        </authorList>
    </citation>
    <scope>NUCLEOTIDE SEQUENCE [GENOMIC DNA]</scope>
    <source>
        <strain>VK1</strain>
    </source>
</reference>
<reference key="2">
    <citation type="journal article" date="2000" name="Structure">
        <title>Another piece of the ribosome: solution structure of S16 and its location in the 30S subunit.</title>
        <authorList>
            <person name="Allard P."/>
            <person name="Rak A.V."/>
            <person name="Wimberly B.T."/>
            <person name="Clemons W.M. Jr."/>
            <person name="Kalinin A."/>
            <person name="Helgstrand M."/>
            <person name="Garber M.B."/>
            <person name="Ramakrishnan V."/>
            <person name="Haerd T."/>
        </authorList>
    </citation>
    <scope>STRUCTURE BY NMR</scope>
    <source>
        <strain>VK1</strain>
    </source>
</reference>
<accession>P80379</accession>
<accession>Q9EVT6</accession>
<evidence type="ECO:0000255" key="1">
    <source>
        <dbReference type="HAMAP-Rule" id="MF_00385"/>
    </source>
</evidence>
<evidence type="ECO:0000305" key="2"/>
<evidence type="ECO:0007829" key="3">
    <source>
        <dbReference type="PDB" id="1EMW"/>
    </source>
</evidence>
<keyword id="KW-0002">3D-structure</keyword>
<keyword id="KW-0687">Ribonucleoprotein</keyword>
<keyword id="KW-0689">Ribosomal protein</keyword>
<keyword id="KW-0694">RNA-binding</keyword>
<keyword id="KW-0699">rRNA-binding</keyword>
<comment type="function">
    <text>Binds to the lower part of the body of the 30S subunit, where it stabilizes two of its domains.</text>
</comment>
<comment type="subunit">
    <text>Part of the 30S ribosomal subunit.</text>
</comment>
<comment type="similarity">
    <text evidence="1">Belongs to the bacterial ribosomal protein bS16 family.</text>
</comment>
<name>RS16_THETH</name>
<dbReference type="EMBL" id="AJ224859">
    <property type="protein sequence ID" value="CAC21226.1"/>
    <property type="molecule type" value="Genomic_DNA"/>
</dbReference>
<dbReference type="PDB" id="1EMW">
    <property type="method" value="NMR"/>
    <property type="chains" value="A=1-70"/>
</dbReference>
<dbReference type="PDBsum" id="1EMW"/>
<dbReference type="SMR" id="P80379"/>
<dbReference type="EvolutionaryTrace" id="P80379"/>
<dbReference type="GO" id="GO:0005737">
    <property type="term" value="C:cytoplasm"/>
    <property type="evidence" value="ECO:0007669"/>
    <property type="project" value="UniProtKB-ARBA"/>
</dbReference>
<dbReference type="GO" id="GO:0015935">
    <property type="term" value="C:small ribosomal subunit"/>
    <property type="evidence" value="ECO:0007669"/>
    <property type="project" value="TreeGrafter"/>
</dbReference>
<dbReference type="GO" id="GO:0019843">
    <property type="term" value="F:rRNA binding"/>
    <property type="evidence" value="ECO:0007669"/>
    <property type="project" value="UniProtKB-KW"/>
</dbReference>
<dbReference type="GO" id="GO:0003735">
    <property type="term" value="F:structural constituent of ribosome"/>
    <property type="evidence" value="ECO:0007669"/>
    <property type="project" value="InterPro"/>
</dbReference>
<dbReference type="GO" id="GO:0006412">
    <property type="term" value="P:translation"/>
    <property type="evidence" value="ECO:0007669"/>
    <property type="project" value="UniProtKB-UniRule"/>
</dbReference>
<dbReference type="FunFam" id="3.30.1320.10:FF:000005">
    <property type="entry name" value="30S ribosomal protein S16"/>
    <property type="match status" value="1"/>
</dbReference>
<dbReference type="Gene3D" id="3.30.1320.10">
    <property type="match status" value="1"/>
</dbReference>
<dbReference type="HAMAP" id="MF_00385">
    <property type="entry name" value="Ribosomal_bS16"/>
    <property type="match status" value="1"/>
</dbReference>
<dbReference type="InterPro" id="IPR000307">
    <property type="entry name" value="Ribosomal_bS16"/>
</dbReference>
<dbReference type="InterPro" id="IPR023803">
    <property type="entry name" value="Ribosomal_bS16_dom_sf"/>
</dbReference>
<dbReference type="NCBIfam" id="TIGR00002">
    <property type="entry name" value="S16"/>
    <property type="match status" value="1"/>
</dbReference>
<dbReference type="PANTHER" id="PTHR12919">
    <property type="entry name" value="30S RIBOSOMAL PROTEIN S16"/>
    <property type="match status" value="1"/>
</dbReference>
<dbReference type="PANTHER" id="PTHR12919:SF20">
    <property type="entry name" value="SMALL RIBOSOMAL SUBUNIT PROTEIN BS16M"/>
    <property type="match status" value="1"/>
</dbReference>
<dbReference type="Pfam" id="PF00886">
    <property type="entry name" value="Ribosomal_S16"/>
    <property type="match status" value="1"/>
</dbReference>
<dbReference type="SUPFAM" id="SSF54565">
    <property type="entry name" value="Ribosomal protein S16"/>
    <property type="match status" value="1"/>
</dbReference>
<feature type="chain" id="PRO_0000167270" description="Small ribosomal subunit protein bS16">
    <location>
        <begin position="1"/>
        <end position="91"/>
    </location>
</feature>
<feature type="sequence conflict" description="In Ref. 2." evidence="2" ref="2">
    <location>
        <begin position="18"/>
        <end position="20"/>
    </location>
</feature>
<feature type="strand" evidence="3">
    <location>
        <begin position="3"/>
        <end position="8"/>
    </location>
</feature>
<feature type="strand" evidence="3">
    <location>
        <begin position="11"/>
        <end position="13"/>
    </location>
</feature>
<feature type="strand" evidence="3">
    <location>
        <begin position="20"/>
        <end position="25"/>
    </location>
</feature>
<feature type="strand" evidence="3">
    <location>
        <begin position="30"/>
        <end position="32"/>
    </location>
</feature>
<feature type="strand" evidence="3">
    <location>
        <begin position="36"/>
        <end position="42"/>
    </location>
</feature>
<feature type="strand" evidence="3">
    <location>
        <begin position="46"/>
        <end position="49"/>
    </location>
</feature>
<feature type="helix" evidence="3">
    <location>
        <begin position="56"/>
        <end position="64"/>
    </location>
</feature>
<feature type="helix" evidence="3">
    <location>
        <begin position="71"/>
        <end position="77"/>
    </location>
</feature>
<feature type="turn" evidence="3">
    <location>
        <begin position="78"/>
        <end position="81"/>
    </location>
</feature>
<protein>
    <recommendedName>
        <fullName evidence="1">Small ribosomal subunit protein bS16</fullName>
    </recommendedName>
    <alternativeName>
        <fullName evidence="2">30S ribosomal protein S16</fullName>
    </alternativeName>
</protein>